<proteinExistence type="inferred from homology"/>
<accession>A8FKA0</accession>
<feature type="chain" id="PRO_1000073295" description="Large ribosomal subunit protein bL25">
    <location>
        <begin position="1"/>
        <end position="178"/>
    </location>
</feature>
<keyword id="KW-0687">Ribonucleoprotein</keyword>
<keyword id="KW-0689">Ribosomal protein</keyword>
<keyword id="KW-0694">RNA-binding</keyword>
<keyword id="KW-0699">rRNA-binding</keyword>
<sequence length="178" mass="19461">MLEGIVRESIGRKAAKALKRDGYLIANIYGKGLENINAAFKVNEFIKEVRKKTTLIFDVKVGSQTLSVVVVDYQKDPVTAELKHVDLKVAQKGVISKYMVPVKITGTAIGLKNKGVLIQSKRRLKVKCAAENLPNFFELDVSKLDVGDALLVRDIVVPAGVTMIDADRVAVVGVEKAR</sequence>
<protein>
    <recommendedName>
        <fullName evidence="1">Large ribosomal subunit protein bL25</fullName>
    </recommendedName>
    <alternativeName>
        <fullName evidence="2">50S ribosomal protein L25</fullName>
    </alternativeName>
    <alternativeName>
        <fullName evidence="1">General stress protein CTC</fullName>
    </alternativeName>
</protein>
<gene>
    <name evidence="1" type="primary">rplY</name>
    <name evidence="1" type="synonym">ctc</name>
    <name type="ordered locus">C8J_0288</name>
</gene>
<name>RL25_CAMJ8</name>
<organism>
    <name type="scientific">Campylobacter jejuni subsp. jejuni serotype O:6 (strain 81116 / NCTC 11828)</name>
    <dbReference type="NCBI Taxonomy" id="407148"/>
    <lineage>
        <taxon>Bacteria</taxon>
        <taxon>Pseudomonadati</taxon>
        <taxon>Campylobacterota</taxon>
        <taxon>Epsilonproteobacteria</taxon>
        <taxon>Campylobacterales</taxon>
        <taxon>Campylobacteraceae</taxon>
        <taxon>Campylobacter</taxon>
    </lineage>
</organism>
<reference key="1">
    <citation type="journal article" date="2007" name="J. Bacteriol.">
        <title>The complete genome sequence of Campylobacter jejuni strain 81116 (NCTC11828).</title>
        <authorList>
            <person name="Pearson B.M."/>
            <person name="Gaskin D.J.H."/>
            <person name="Segers R.P.A.M."/>
            <person name="Wells J.M."/>
            <person name="Nuijten P.J.M."/>
            <person name="van Vliet A.H.M."/>
        </authorList>
    </citation>
    <scope>NUCLEOTIDE SEQUENCE [LARGE SCALE GENOMIC DNA]</scope>
    <source>
        <strain>81116 / NCTC 11828</strain>
    </source>
</reference>
<dbReference type="EMBL" id="CP000814">
    <property type="protein sequence ID" value="ABV51887.1"/>
    <property type="molecule type" value="Genomic_DNA"/>
</dbReference>
<dbReference type="RefSeq" id="WP_002791314.1">
    <property type="nucleotide sequence ID" value="NC_009839.1"/>
</dbReference>
<dbReference type="SMR" id="A8FKA0"/>
<dbReference type="KEGG" id="cju:C8J_0288"/>
<dbReference type="HOGENOM" id="CLU_075939_2_2_7"/>
<dbReference type="GO" id="GO:0022625">
    <property type="term" value="C:cytosolic large ribosomal subunit"/>
    <property type="evidence" value="ECO:0007669"/>
    <property type="project" value="TreeGrafter"/>
</dbReference>
<dbReference type="GO" id="GO:0008097">
    <property type="term" value="F:5S rRNA binding"/>
    <property type="evidence" value="ECO:0007669"/>
    <property type="project" value="InterPro"/>
</dbReference>
<dbReference type="GO" id="GO:0003735">
    <property type="term" value="F:structural constituent of ribosome"/>
    <property type="evidence" value="ECO:0007669"/>
    <property type="project" value="InterPro"/>
</dbReference>
<dbReference type="GO" id="GO:0006412">
    <property type="term" value="P:translation"/>
    <property type="evidence" value="ECO:0007669"/>
    <property type="project" value="UniProtKB-UniRule"/>
</dbReference>
<dbReference type="CDD" id="cd00495">
    <property type="entry name" value="Ribosomal_L25_TL5_CTC"/>
    <property type="match status" value="1"/>
</dbReference>
<dbReference type="Gene3D" id="2.170.120.20">
    <property type="entry name" value="Ribosomal protein L25, beta domain"/>
    <property type="match status" value="1"/>
</dbReference>
<dbReference type="Gene3D" id="2.40.240.10">
    <property type="entry name" value="Ribosomal Protein L25, Chain P"/>
    <property type="match status" value="1"/>
</dbReference>
<dbReference type="HAMAP" id="MF_01334">
    <property type="entry name" value="Ribosomal_bL25_CTC"/>
    <property type="match status" value="1"/>
</dbReference>
<dbReference type="InterPro" id="IPR020056">
    <property type="entry name" value="Rbsml_bL25/Gln-tRNA_synth_N"/>
</dbReference>
<dbReference type="InterPro" id="IPR011035">
    <property type="entry name" value="Ribosomal_bL25/Gln-tRNA_synth"/>
</dbReference>
<dbReference type="InterPro" id="IPR020057">
    <property type="entry name" value="Ribosomal_bL25_b-dom"/>
</dbReference>
<dbReference type="InterPro" id="IPR037121">
    <property type="entry name" value="Ribosomal_bL25_C"/>
</dbReference>
<dbReference type="InterPro" id="IPR001021">
    <property type="entry name" value="Ribosomal_bL25_long"/>
</dbReference>
<dbReference type="InterPro" id="IPR029751">
    <property type="entry name" value="Ribosomal_L25_dom"/>
</dbReference>
<dbReference type="InterPro" id="IPR020930">
    <property type="entry name" value="Ribosomal_uL5_bac-type"/>
</dbReference>
<dbReference type="NCBIfam" id="TIGR00731">
    <property type="entry name" value="bL25_bact_ctc"/>
    <property type="match status" value="1"/>
</dbReference>
<dbReference type="NCBIfam" id="NF004129">
    <property type="entry name" value="PRK05618.1-4"/>
    <property type="match status" value="1"/>
</dbReference>
<dbReference type="PANTHER" id="PTHR33284">
    <property type="entry name" value="RIBOSOMAL PROTEIN L25/GLN-TRNA SYNTHETASE, ANTI-CODON-BINDING DOMAIN-CONTAINING PROTEIN"/>
    <property type="match status" value="1"/>
</dbReference>
<dbReference type="PANTHER" id="PTHR33284:SF1">
    <property type="entry name" value="RIBOSOMAL PROTEIN L25_GLN-TRNA SYNTHETASE, ANTI-CODON-BINDING DOMAIN-CONTAINING PROTEIN"/>
    <property type="match status" value="1"/>
</dbReference>
<dbReference type="Pfam" id="PF01386">
    <property type="entry name" value="Ribosomal_L25p"/>
    <property type="match status" value="1"/>
</dbReference>
<dbReference type="Pfam" id="PF14693">
    <property type="entry name" value="Ribosomal_TL5_C"/>
    <property type="match status" value="1"/>
</dbReference>
<dbReference type="SUPFAM" id="SSF50715">
    <property type="entry name" value="Ribosomal protein L25-like"/>
    <property type="match status" value="1"/>
</dbReference>
<comment type="function">
    <text evidence="1">This is one of the proteins that binds to the 5S RNA in the ribosome where it forms part of the central protuberance.</text>
</comment>
<comment type="subunit">
    <text evidence="1">Part of the 50S ribosomal subunit; part of the 5S rRNA/L5/L18/L25 subcomplex. Contacts the 5S rRNA. Binds to the 5S rRNA independently of L5 and L18.</text>
</comment>
<comment type="similarity">
    <text evidence="1">Belongs to the bacterial ribosomal protein bL25 family. CTC subfamily.</text>
</comment>
<evidence type="ECO:0000255" key="1">
    <source>
        <dbReference type="HAMAP-Rule" id="MF_01334"/>
    </source>
</evidence>
<evidence type="ECO:0000305" key="2"/>